<feature type="chain" id="PRO_0000244250" description="Large ribosomal subunit protein bL25">
    <location>
        <begin position="1"/>
        <end position="209"/>
    </location>
</feature>
<evidence type="ECO:0000255" key="1">
    <source>
        <dbReference type="HAMAP-Rule" id="MF_01334"/>
    </source>
</evidence>
<evidence type="ECO:0000305" key="2"/>
<gene>
    <name evidence="1" type="primary">rplY</name>
    <name evidence="1" type="synonym">ctc</name>
    <name type="ordered locus">XC_3357</name>
</gene>
<sequence length="209" mass="23136">MAKTHEIKVERRADEGKGASRRLRHAGVIPAIVYGGELEPVSIQLNHEQIWLAQQNEWFYSSILDLNLNGDVQQVLLRDMQRHPFKQLIMHIDFQRVSANEKLSASVPLHFINEAISPAGKSSEVVVTHELNEVQVVCLPKDLPEFIEIDLSTLEVGAVIHLSEITLPAGVEIPELKLGKEHDVAVVIAKHGQVEADDVADEAAEGDAK</sequence>
<comment type="function">
    <text evidence="1">This is one of the proteins that binds to the 5S RNA in the ribosome where it forms part of the central protuberance.</text>
</comment>
<comment type="subunit">
    <text evidence="1">Part of the 50S ribosomal subunit; part of the 5S rRNA/L5/L18/L25 subcomplex. Contacts the 5S rRNA. Binds to the 5S rRNA independently of L5 and L18.</text>
</comment>
<comment type="similarity">
    <text evidence="1">Belongs to the bacterial ribosomal protein bL25 family. CTC subfamily.</text>
</comment>
<name>RL25_XANC8</name>
<proteinExistence type="inferred from homology"/>
<reference key="1">
    <citation type="journal article" date="2005" name="Genome Res.">
        <title>Comparative and functional genomic analyses of the pathogenicity of phytopathogen Xanthomonas campestris pv. campestris.</title>
        <authorList>
            <person name="Qian W."/>
            <person name="Jia Y."/>
            <person name="Ren S.-X."/>
            <person name="He Y.-Q."/>
            <person name="Feng J.-X."/>
            <person name="Lu L.-F."/>
            <person name="Sun Q."/>
            <person name="Ying G."/>
            <person name="Tang D.-J."/>
            <person name="Tang H."/>
            <person name="Wu W."/>
            <person name="Hao P."/>
            <person name="Wang L."/>
            <person name="Jiang B.-L."/>
            <person name="Zeng S."/>
            <person name="Gu W.-Y."/>
            <person name="Lu G."/>
            <person name="Rong L."/>
            <person name="Tian Y."/>
            <person name="Yao Z."/>
            <person name="Fu G."/>
            <person name="Chen B."/>
            <person name="Fang R."/>
            <person name="Qiang B."/>
            <person name="Chen Z."/>
            <person name="Zhao G.-P."/>
            <person name="Tang J.-L."/>
            <person name="He C."/>
        </authorList>
    </citation>
    <scope>NUCLEOTIDE SEQUENCE [LARGE SCALE GENOMIC DNA]</scope>
    <source>
        <strain>8004</strain>
    </source>
</reference>
<accession>Q4URC2</accession>
<dbReference type="EMBL" id="CP000050">
    <property type="protein sequence ID" value="AAY50401.1"/>
    <property type="molecule type" value="Genomic_DNA"/>
</dbReference>
<dbReference type="RefSeq" id="WP_011036109.1">
    <property type="nucleotide sequence ID" value="NZ_CP155948.1"/>
</dbReference>
<dbReference type="SMR" id="Q4URC2"/>
<dbReference type="KEGG" id="xcb:XC_3357"/>
<dbReference type="HOGENOM" id="CLU_075939_0_1_6"/>
<dbReference type="Proteomes" id="UP000000420">
    <property type="component" value="Chromosome"/>
</dbReference>
<dbReference type="GO" id="GO:0022625">
    <property type="term" value="C:cytosolic large ribosomal subunit"/>
    <property type="evidence" value="ECO:0007669"/>
    <property type="project" value="TreeGrafter"/>
</dbReference>
<dbReference type="GO" id="GO:0008097">
    <property type="term" value="F:5S rRNA binding"/>
    <property type="evidence" value="ECO:0007669"/>
    <property type="project" value="InterPro"/>
</dbReference>
<dbReference type="GO" id="GO:0003735">
    <property type="term" value="F:structural constituent of ribosome"/>
    <property type="evidence" value="ECO:0007669"/>
    <property type="project" value="InterPro"/>
</dbReference>
<dbReference type="GO" id="GO:0006412">
    <property type="term" value="P:translation"/>
    <property type="evidence" value="ECO:0007669"/>
    <property type="project" value="UniProtKB-UniRule"/>
</dbReference>
<dbReference type="CDD" id="cd00495">
    <property type="entry name" value="Ribosomal_L25_TL5_CTC"/>
    <property type="match status" value="1"/>
</dbReference>
<dbReference type="FunFam" id="2.40.240.10:FF:000002">
    <property type="entry name" value="50S ribosomal protein L25"/>
    <property type="match status" value="1"/>
</dbReference>
<dbReference type="Gene3D" id="2.170.120.20">
    <property type="entry name" value="Ribosomal protein L25, beta domain"/>
    <property type="match status" value="1"/>
</dbReference>
<dbReference type="Gene3D" id="2.40.240.10">
    <property type="entry name" value="Ribosomal Protein L25, Chain P"/>
    <property type="match status" value="1"/>
</dbReference>
<dbReference type="HAMAP" id="MF_01336">
    <property type="entry name" value="Ribosomal_bL25"/>
    <property type="match status" value="1"/>
</dbReference>
<dbReference type="HAMAP" id="MF_01334">
    <property type="entry name" value="Ribosomal_bL25_CTC"/>
    <property type="match status" value="1"/>
</dbReference>
<dbReference type="InterPro" id="IPR020056">
    <property type="entry name" value="Rbsml_bL25/Gln-tRNA_synth_N"/>
</dbReference>
<dbReference type="InterPro" id="IPR011035">
    <property type="entry name" value="Ribosomal_bL25/Gln-tRNA_synth"/>
</dbReference>
<dbReference type="InterPro" id="IPR020057">
    <property type="entry name" value="Ribosomal_bL25_b-dom"/>
</dbReference>
<dbReference type="InterPro" id="IPR037121">
    <property type="entry name" value="Ribosomal_bL25_C"/>
</dbReference>
<dbReference type="InterPro" id="IPR001021">
    <property type="entry name" value="Ribosomal_bL25_long"/>
</dbReference>
<dbReference type="InterPro" id="IPR020055">
    <property type="entry name" value="Ribosomal_bL25_short"/>
</dbReference>
<dbReference type="InterPro" id="IPR029751">
    <property type="entry name" value="Ribosomal_L25_dom"/>
</dbReference>
<dbReference type="InterPro" id="IPR020930">
    <property type="entry name" value="Ribosomal_uL5_bac-type"/>
</dbReference>
<dbReference type="NCBIfam" id="TIGR00731">
    <property type="entry name" value="bL25_bact_ctc"/>
    <property type="match status" value="1"/>
</dbReference>
<dbReference type="NCBIfam" id="NF004128">
    <property type="entry name" value="PRK05618.1-2"/>
    <property type="match status" value="1"/>
</dbReference>
<dbReference type="NCBIfam" id="NF004130">
    <property type="entry name" value="PRK05618.1-5"/>
    <property type="match status" value="1"/>
</dbReference>
<dbReference type="NCBIfam" id="NF004612">
    <property type="entry name" value="PRK05943.1"/>
    <property type="match status" value="1"/>
</dbReference>
<dbReference type="PANTHER" id="PTHR33284">
    <property type="entry name" value="RIBOSOMAL PROTEIN L25/GLN-TRNA SYNTHETASE, ANTI-CODON-BINDING DOMAIN-CONTAINING PROTEIN"/>
    <property type="match status" value="1"/>
</dbReference>
<dbReference type="PANTHER" id="PTHR33284:SF1">
    <property type="entry name" value="RIBOSOMAL PROTEIN L25_GLN-TRNA SYNTHETASE, ANTI-CODON-BINDING DOMAIN-CONTAINING PROTEIN"/>
    <property type="match status" value="1"/>
</dbReference>
<dbReference type="Pfam" id="PF01386">
    <property type="entry name" value="Ribosomal_L25p"/>
    <property type="match status" value="1"/>
</dbReference>
<dbReference type="Pfam" id="PF14693">
    <property type="entry name" value="Ribosomal_TL5_C"/>
    <property type="match status" value="1"/>
</dbReference>
<dbReference type="SUPFAM" id="SSF50715">
    <property type="entry name" value="Ribosomal protein L25-like"/>
    <property type="match status" value="1"/>
</dbReference>
<protein>
    <recommendedName>
        <fullName evidence="1">Large ribosomal subunit protein bL25</fullName>
    </recommendedName>
    <alternativeName>
        <fullName evidence="2">50S ribosomal protein L25</fullName>
    </alternativeName>
    <alternativeName>
        <fullName evidence="1">General stress protein CTC</fullName>
    </alternativeName>
</protein>
<keyword id="KW-0687">Ribonucleoprotein</keyword>
<keyword id="KW-0689">Ribosomal protein</keyword>
<keyword id="KW-0694">RNA-binding</keyword>
<keyword id="KW-0699">rRNA-binding</keyword>
<organism>
    <name type="scientific">Xanthomonas campestris pv. campestris (strain 8004)</name>
    <dbReference type="NCBI Taxonomy" id="314565"/>
    <lineage>
        <taxon>Bacteria</taxon>
        <taxon>Pseudomonadati</taxon>
        <taxon>Pseudomonadota</taxon>
        <taxon>Gammaproteobacteria</taxon>
        <taxon>Lysobacterales</taxon>
        <taxon>Lysobacteraceae</taxon>
        <taxon>Xanthomonas</taxon>
    </lineage>
</organism>